<reference key="1">
    <citation type="submission" date="2004-12" db="EMBL/GenBank/DDBJ databases">
        <title>The genome sequence of Borrelia hermsii and Borrelia turicatae: comparative analysis of two agents of endemic N. America relapsing fever.</title>
        <authorList>
            <person name="Porcella S.F."/>
            <person name="Raffel S.J."/>
            <person name="Schrumpf M.E."/>
            <person name="Montgomery B."/>
            <person name="Smith T."/>
            <person name="Schwan T.G."/>
        </authorList>
    </citation>
    <scope>NUCLEOTIDE SEQUENCE [LARGE SCALE GENOMIC DNA]</scope>
    <source>
        <strain>HS1 / DAH</strain>
    </source>
</reference>
<dbReference type="EMBL" id="CP000048">
    <property type="protein sequence ID" value="AAX16999.1"/>
    <property type="molecule type" value="Genomic_DNA"/>
</dbReference>
<dbReference type="RefSeq" id="WP_012422253.1">
    <property type="nucleotide sequence ID" value="NZ_CP073136.1"/>
</dbReference>
<dbReference type="SMR" id="B2S0J3"/>
<dbReference type="GeneID" id="71843308"/>
<dbReference type="KEGG" id="bhr:BH0490"/>
<dbReference type="HOGENOM" id="CLU_061015_2_1_12"/>
<dbReference type="Proteomes" id="UP000008834">
    <property type="component" value="Chromosome"/>
</dbReference>
<dbReference type="GO" id="GO:1990904">
    <property type="term" value="C:ribonucleoprotein complex"/>
    <property type="evidence" value="ECO:0007669"/>
    <property type="project" value="UniProtKB-KW"/>
</dbReference>
<dbReference type="GO" id="GO:0005840">
    <property type="term" value="C:ribosome"/>
    <property type="evidence" value="ECO:0007669"/>
    <property type="project" value="UniProtKB-KW"/>
</dbReference>
<dbReference type="GO" id="GO:0019843">
    <property type="term" value="F:rRNA binding"/>
    <property type="evidence" value="ECO:0007669"/>
    <property type="project" value="UniProtKB-UniRule"/>
</dbReference>
<dbReference type="GO" id="GO:0003735">
    <property type="term" value="F:structural constituent of ribosome"/>
    <property type="evidence" value="ECO:0007669"/>
    <property type="project" value="InterPro"/>
</dbReference>
<dbReference type="GO" id="GO:0000049">
    <property type="term" value="F:tRNA binding"/>
    <property type="evidence" value="ECO:0007669"/>
    <property type="project" value="UniProtKB-UniRule"/>
</dbReference>
<dbReference type="GO" id="GO:0006412">
    <property type="term" value="P:translation"/>
    <property type="evidence" value="ECO:0007669"/>
    <property type="project" value="UniProtKB-UniRule"/>
</dbReference>
<dbReference type="FunFam" id="3.30.1440.10:FF:000001">
    <property type="entry name" value="50S ribosomal protein L5"/>
    <property type="match status" value="1"/>
</dbReference>
<dbReference type="Gene3D" id="3.30.1440.10">
    <property type="match status" value="1"/>
</dbReference>
<dbReference type="HAMAP" id="MF_01333_B">
    <property type="entry name" value="Ribosomal_uL5_B"/>
    <property type="match status" value="1"/>
</dbReference>
<dbReference type="InterPro" id="IPR002132">
    <property type="entry name" value="Ribosomal_uL5"/>
</dbReference>
<dbReference type="InterPro" id="IPR020930">
    <property type="entry name" value="Ribosomal_uL5_bac-type"/>
</dbReference>
<dbReference type="InterPro" id="IPR031309">
    <property type="entry name" value="Ribosomal_uL5_C"/>
</dbReference>
<dbReference type="InterPro" id="IPR020929">
    <property type="entry name" value="Ribosomal_uL5_CS"/>
</dbReference>
<dbReference type="InterPro" id="IPR022803">
    <property type="entry name" value="Ribosomal_uL5_dom_sf"/>
</dbReference>
<dbReference type="InterPro" id="IPR031310">
    <property type="entry name" value="Ribosomal_uL5_N"/>
</dbReference>
<dbReference type="NCBIfam" id="NF000585">
    <property type="entry name" value="PRK00010.1"/>
    <property type="match status" value="1"/>
</dbReference>
<dbReference type="PANTHER" id="PTHR11994">
    <property type="entry name" value="60S RIBOSOMAL PROTEIN L11-RELATED"/>
    <property type="match status" value="1"/>
</dbReference>
<dbReference type="Pfam" id="PF00281">
    <property type="entry name" value="Ribosomal_L5"/>
    <property type="match status" value="1"/>
</dbReference>
<dbReference type="Pfam" id="PF00673">
    <property type="entry name" value="Ribosomal_L5_C"/>
    <property type="match status" value="1"/>
</dbReference>
<dbReference type="PIRSF" id="PIRSF002161">
    <property type="entry name" value="Ribosomal_L5"/>
    <property type="match status" value="1"/>
</dbReference>
<dbReference type="SUPFAM" id="SSF55282">
    <property type="entry name" value="RL5-like"/>
    <property type="match status" value="1"/>
</dbReference>
<dbReference type="PROSITE" id="PS00358">
    <property type="entry name" value="RIBOSOMAL_L5"/>
    <property type="match status" value="1"/>
</dbReference>
<feature type="chain" id="PRO_1000142359" description="Large ribosomal subunit protein uL5">
    <location>
        <begin position="1"/>
        <end position="182"/>
    </location>
</feature>
<gene>
    <name evidence="1" type="primary">rplE</name>
    <name type="ordered locus">BH0490</name>
</gene>
<evidence type="ECO:0000255" key="1">
    <source>
        <dbReference type="HAMAP-Rule" id="MF_01333"/>
    </source>
</evidence>
<evidence type="ECO:0000305" key="2"/>
<accession>B2S0J3</accession>
<proteinExistence type="inferred from homology"/>
<comment type="function">
    <text evidence="1">This is one of the proteins that bind and probably mediate the attachment of the 5S RNA into the large ribosomal subunit, where it forms part of the central protuberance. In the 70S ribosome it contacts protein S13 of the 30S subunit (bridge B1b), connecting the 2 subunits; this bridge is implicated in subunit movement. Contacts the P site tRNA; the 5S rRNA and some of its associated proteins might help stabilize positioning of ribosome-bound tRNAs.</text>
</comment>
<comment type="subunit">
    <text evidence="1">Part of the 50S ribosomal subunit; part of the 5S rRNA/L5/L18/L25 subcomplex. Contacts the 5S rRNA and the P site tRNA. Forms a bridge to the 30S subunit in the 70S ribosome.</text>
</comment>
<comment type="similarity">
    <text evidence="1">Belongs to the universal ribosomal protein uL5 family.</text>
</comment>
<keyword id="KW-0687">Ribonucleoprotein</keyword>
<keyword id="KW-0689">Ribosomal protein</keyword>
<keyword id="KW-0694">RNA-binding</keyword>
<keyword id="KW-0699">rRNA-binding</keyword>
<keyword id="KW-0820">tRNA-binding</keyword>
<organism>
    <name type="scientific">Borrelia hermsii (strain HS1 / DAH)</name>
    <dbReference type="NCBI Taxonomy" id="314723"/>
    <lineage>
        <taxon>Bacteria</taxon>
        <taxon>Pseudomonadati</taxon>
        <taxon>Spirochaetota</taxon>
        <taxon>Spirochaetia</taxon>
        <taxon>Spirochaetales</taxon>
        <taxon>Borreliaceae</taxon>
        <taxon>Borrelia</taxon>
    </lineage>
</organism>
<name>RL5_BORHD</name>
<sequence>MSYVPELKRHYKDNVIKELVSEFQYKSIMQAPKIEKIVVSMGVGDAVKNKKLLDSAISELSQITGQRAVKTKAKKAIAGFKIRQGQDIGAKVTLRGNIMYEFLYKLINLALPRVKDFRGVDGNAFDGNGNYSFGIAEQIIFSEIDYDKIERISGLNVTIVTTALNDKEGKALLSKFGMPFSN</sequence>
<protein>
    <recommendedName>
        <fullName evidence="1">Large ribosomal subunit protein uL5</fullName>
    </recommendedName>
    <alternativeName>
        <fullName evidence="2">50S ribosomal protein L5</fullName>
    </alternativeName>
</protein>